<name>RNPH_CITK8</name>
<dbReference type="EC" id="2.7.7.56" evidence="1"/>
<dbReference type="EMBL" id="CP000822">
    <property type="protein sequence ID" value="ABV16144.1"/>
    <property type="molecule type" value="Genomic_DNA"/>
</dbReference>
<dbReference type="RefSeq" id="WP_012135779.1">
    <property type="nucleotide sequence ID" value="NC_009792.1"/>
</dbReference>
<dbReference type="SMR" id="A8ARN1"/>
<dbReference type="STRING" id="290338.CKO_05101"/>
<dbReference type="GeneID" id="45138553"/>
<dbReference type="KEGG" id="cko:CKO_05101"/>
<dbReference type="HOGENOM" id="CLU_050858_0_0_6"/>
<dbReference type="OrthoDB" id="9802265at2"/>
<dbReference type="Proteomes" id="UP000008148">
    <property type="component" value="Chromosome"/>
</dbReference>
<dbReference type="GO" id="GO:0000175">
    <property type="term" value="F:3'-5'-RNA exonuclease activity"/>
    <property type="evidence" value="ECO:0007669"/>
    <property type="project" value="UniProtKB-UniRule"/>
</dbReference>
<dbReference type="GO" id="GO:0000049">
    <property type="term" value="F:tRNA binding"/>
    <property type="evidence" value="ECO:0007669"/>
    <property type="project" value="UniProtKB-UniRule"/>
</dbReference>
<dbReference type="GO" id="GO:0009022">
    <property type="term" value="F:tRNA nucleotidyltransferase activity"/>
    <property type="evidence" value="ECO:0007669"/>
    <property type="project" value="UniProtKB-UniRule"/>
</dbReference>
<dbReference type="GO" id="GO:0016075">
    <property type="term" value="P:rRNA catabolic process"/>
    <property type="evidence" value="ECO:0007669"/>
    <property type="project" value="UniProtKB-UniRule"/>
</dbReference>
<dbReference type="GO" id="GO:0006364">
    <property type="term" value="P:rRNA processing"/>
    <property type="evidence" value="ECO:0007669"/>
    <property type="project" value="UniProtKB-KW"/>
</dbReference>
<dbReference type="GO" id="GO:0008033">
    <property type="term" value="P:tRNA processing"/>
    <property type="evidence" value="ECO:0007669"/>
    <property type="project" value="UniProtKB-UniRule"/>
</dbReference>
<dbReference type="CDD" id="cd11362">
    <property type="entry name" value="RNase_PH_bact"/>
    <property type="match status" value="1"/>
</dbReference>
<dbReference type="FunFam" id="3.30.230.70:FF:000003">
    <property type="entry name" value="Ribonuclease PH"/>
    <property type="match status" value="1"/>
</dbReference>
<dbReference type="Gene3D" id="3.30.230.70">
    <property type="entry name" value="GHMP Kinase, N-terminal domain"/>
    <property type="match status" value="1"/>
</dbReference>
<dbReference type="HAMAP" id="MF_00564">
    <property type="entry name" value="RNase_PH"/>
    <property type="match status" value="1"/>
</dbReference>
<dbReference type="InterPro" id="IPR001247">
    <property type="entry name" value="ExoRNase_PH_dom1"/>
</dbReference>
<dbReference type="InterPro" id="IPR015847">
    <property type="entry name" value="ExoRNase_PH_dom2"/>
</dbReference>
<dbReference type="InterPro" id="IPR036345">
    <property type="entry name" value="ExoRNase_PH_dom2_sf"/>
</dbReference>
<dbReference type="InterPro" id="IPR027408">
    <property type="entry name" value="PNPase/RNase_PH_dom_sf"/>
</dbReference>
<dbReference type="InterPro" id="IPR020568">
    <property type="entry name" value="Ribosomal_Su5_D2-typ_SF"/>
</dbReference>
<dbReference type="InterPro" id="IPR050080">
    <property type="entry name" value="RNase_PH"/>
</dbReference>
<dbReference type="InterPro" id="IPR002381">
    <property type="entry name" value="RNase_PH_bac-type"/>
</dbReference>
<dbReference type="InterPro" id="IPR018336">
    <property type="entry name" value="RNase_PH_CS"/>
</dbReference>
<dbReference type="NCBIfam" id="TIGR01966">
    <property type="entry name" value="RNasePH"/>
    <property type="match status" value="1"/>
</dbReference>
<dbReference type="PANTHER" id="PTHR11953">
    <property type="entry name" value="EXOSOME COMPLEX COMPONENT"/>
    <property type="match status" value="1"/>
</dbReference>
<dbReference type="PANTHER" id="PTHR11953:SF0">
    <property type="entry name" value="EXOSOME COMPLEX COMPONENT RRP41"/>
    <property type="match status" value="1"/>
</dbReference>
<dbReference type="Pfam" id="PF01138">
    <property type="entry name" value="RNase_PH"/>
    <property type="match status" value="1"/>
</dbReference>
<dbReference type="Pfam" id="PF03725">
    <property type="entry name" value="RNase_PH_C"/>
    <property type="match status" value="1"/>
</dbReference>
<dbReference type="SUPFAM" id="SSF55666">
    <property type="entry name" value="Ribonuclease PH domain 2-like"/>
    <property type="match status" value="1"/>
</dbReference>
<dbReference type="SUPFAM" id="SSF54211">
    <property type="entry name" value="Ribosomal protein S5 domain 2-like"/>
    <property type="match status" value="1"/>
</dbReference>
<dbReference type="PROSITE" id="PS01277">
    <property type="entry name" value="RIBONUCLEASE_PH"/>
    <property type="match status" value="1"/>
</dbReference>
<sequence>MRPAGRSANQVRPVTLTRNYTKHAEGSVLVEFGDTKVLCTASIEEGVPRFLKGQGQGWITAEYGMLPRATHTRNAREAAKGKQGGRTMEIQRLIARALRAAVDLKTLGEFTITLDCDVIQADGGTRTASISGACVALADALNKLVANGKLKTNPMKGMVAAVSVGIVNGEALCDLEYVEDSAAETDMNVVMTEDGRIIEVQGTAEGEPFSHEELLTLLALARGGIESIVATQKAALEN</sequence>
<evidence type="ECO:0000255" key="1">
    <source>
        <dbReference type="HAMAP-Rule" id="MF_00564"/>
    </source>
</evidence>
<feature type="chain" id="PRO_1000024795" description="Ribonuclease PH">
    <location>
        <begin position="1"/>
        <end position="238"/>
    </location>
</feature>
<feature type="binding site" evidence="1">
    <location>
        <position position="86"/>
    </location>
    <ligand>
        <name>phosphate</name>
        <dbReference type="ChEBI" id="CHEBI:43474"/>
        <note>substrate</note>
    </ligand>
</feature>
<feature type="binding site" evidence="1">
    <location>
        <begin position="124"/>
        <end position="126"/>
    </location>
    <ligand>
        <name>phosphate</name>
        <dbReference type="ChEBI" id="CHEBI:43474"/>
        <note>substrate</note>
    </ligand>
</feature>
<comment type="function">
    <text evidence="1">Phosphorolytic 3'-5' exoribonuclease that plays an important role in tRNA 3'-end maturation. Removes nucleotide residues following the 3'-CCA terminus of tRNAs; can also add nucleotides to the ends of RNA molecules by using nucleoside diphosphates as substrates, but this may not be physiologically important. Probably plays a role in initiation of 16S rRNA degradation (leading to ribosome degradation) during starvation.</text>
</comment>
<comment type="catalytic activity">
    <reaction evidence="1">
        <text>tRNA(n+1) + phosphate = tRNA(n) + a ribonucleoside 5'-diphosphate</text>
        <dbReference type="Rhea" id="RHEA:10628"/>
        <dbReference type="Rhea" id="RHEA-COMP:17343"/>
        <dbReference type="Rhea" id="RHEA-COMP:17344"/>
        <dbReference type="ChEBI" id="CHEBI:43474"/>
        <dbReference type="ChEBI" id="CHEBI:57930"/>
        <dbReference type="ChEBI" id="CHEBI:173114"/>
        <dbReference type="EC" id="2.7.7.56"/>
    </reaction>
</comment>
<comment type="subunit">
    <text evidence="1">Homohexameric ring arranged as a trimer of dimers.</text>
</comment>
<comment type="similarity">
    <text evidence="1">Belongs to the RNase PH family.</text>
</comment>
<gene>
    <name evidence="1" type="primary">rph</name>
    <name type="ordered locus">CKO_05101</name>
</gene>
<protein>
    <recommendedName>
        <fullName evidence="1">Ribonuclease PH</fullName>
        <shortName evidence="1">RNase PH</shortName>
        <ecNumber evidence="1">2.7.7.56</ecNumber>
    </recommendedName>
    <alternativeName>
        <fullName evidence="1">tRNA nucleotidyltransferase</fullName>
    </alternativeName>
</protein>
<proteinExistence type="inferred from homology"/>
<reference key="1">
    <citation type="submission" date="2007-08" db="EMBL/GenBank/DDBJ databases">
        <authorList>
            <consortium name="The Citrobacter koseri Genome Sequencing Project"/>
            <person name="McClelland M."/>
            <person name="Sanderson E.K."/>
            <person name="Porwollik S."/>
            <person name="Spieth J."/>
            <person name="Clifton W.S."/>
            <person name="Latreille P."/>
            <person name="Courtney L."/>
            <person name="Wang C."/>
            <person name="Pepin K."/>
            <person name="Bhonagiri V."/>
            <person name="Nash W."/>
            <person name="Johnson M."/>
            <person name="Thiruvilangam P."/>
            <person name="Wilson R."/>
        </authorList>
    </citation>
    <scope>NUCLEOTIDE SEQUENCE [LARGE SCALE GENOMIC DNA]</scope>
    <source>
        <strain>ATCC BAA-895 / CDC 4225-83 / SGSC4696</strain>
    </source>
</reference>
<organism>
    <name type="scientific">Citrobacter koseri (strain ATCC BAA-895 / CDC 4225-83 / SGSC4696)</name>
    <dbReference type="NCBI Taxonomy" id="290338"/>
    <lineage>
        <taxon>Bacteria</taxon>
        <taxon>Pseudomonadati</taxon>
        <taxon>Pseudomonadota</taxon>
        <taxon>Gammaproteobacteria</taxon>
        <taxon>Enterobacterales</taxon>
        <taxon>Enterobacteriaceae</taxon>
        <taxon>Citrobacter</taxon>
    </lineage>
</organism>
<keyword id="KW-0548">Nucleotidyltransferase</keyword>
<keyword id="KW-1185">Reference proteome</keyword>
<keyword id="KW-0694">RNA-binding</keyword>
<keyword id="KW-0698">rRNA processing</keyword>
<keyword id="KW-0808">Transferase</keyword>
<keyword id="KW-0819">tRNA processing</keyword>
<keyword id="KW-0820">tRNA-binding</keyword>
<accession>A8ARN1</accession>